<dbReference type="EC" id="2.3.1.275" evidence="1"/>
<dbReference type="EMBL" id="CP000738">
    <property type="protein sequence ID" value="ABR59789.1"/>
    <property type="molecule type" value="Genomic_DNA"/>
</dbReference>
<dbReference type="RefSeq" id="WP_011975125.1">
    <property type="nucleotide sequence ID" value="NC_009636.1"/>
</dbReference>
<dbReference type="RefSeq" id="YP_001326624.1">
    <property type="nucleotide sequence ID" value="NC_009636.1"/>
</dbReference>
<dbReference type="SMR" id="A6U809"/>
<dbReference type="STRING" id="366394.Smed_0934"/>
<dbReference type="GeneID" id="61612231"/>
<dbReference type="KEGG" id="smd:Smed_0934"/>
<dbReference type="PATRIC" id="fig|366394.8.peg.4050"/>
<dbReference type="eggNOG" id="COG0344">
    <property type="taxonomic scope" value="Bacteria"/>
</dbReference>
<dbReference type="HOGENOM" id="CLU_081254_1_0_5"/>
<dbReference type="OrthoDB" id="9777124at2"/>
<dbReference type="UniPathway" id="UPA00085"/>
<dbReference type="Proteomes" id="UP000001108">
    <property type="component" value="Chromosome"/>
</dbReference>
<dbReference type="GO" id="GO:0005886">
    <property type="term" value="C:plasma membrane"/>
    <property type="evidence" value="ECO:0007669"/>
    <property type="project" value="UniProtKB-SubCell"/>
</dbReference>
<dbReference type="GO" id="GO:0043772">
    <property type="term" value="F:acyl-phosphate glycerol-3-phosphate acyltransferase activity"/>
    <property type="evidence" value="ECO:0007669"/>
    <property type="project" value="UniProtKB-UniRule"/>
</dbReference>
<dbReference type="GO" id="GO:0008654">
    <property type="term" value="P:phospholipid biosynthetic process"/>
    <property type="evidence" value="ECO:0007669"/>
    <property type="project" value="UniProtKB-UniRule"/>
</dbReference>
<dbReference type="HAMAP" id="MF_01043">
    <property type="entry name" value="PlsY"/>
    <property type="match status" value="1"/>
</dbReference>
<dbReference type="InterPro" id="IPR003811">
    <property type="entry name" value="G3P_acylTferase_PlsY"/>
</dbReference>
<dbReference type="NCBIfam" id="TIGR00023">
    <property type="entry name" value="glycerol-3-phosphate 1-O-acyltransferase PlsY"/>
    <property type="match status" value="1"/>
</dbReference>
<dbReference type="PANTHER" id="PTHR30309:SF0">
    <property type="entry name" value="GLYCEROL-3-PHOSPHATE ACYLTRANSFERASE-RELATED"/>
    <property type="match status" value="1"/>
</dbReference>
<dbReference type="PANTHER" id="PTHR30309">
    <property type="entry name" value="INNER MEMBRANE PROTEIN YGIH"/>
    <property type="match status" value="1"/>
</dbReference>
<dbReference type="Pfam" id="PF02660">
    <property type="entry name" value="G3P_acyltransf"/>
    <property type="match status" value="1"/>
</dbReference>
<dbReference type="SMART" id="SM01207">
    <property type="entry name" value="G3P_acyltransf"/>
    <property type="match status" value="1"/>
</dbReference>
<proteinExistence type="inferred from homology"/>
<sequence length="203" mass="21043">MDIFSWQLGLPSTLACLVFGYLLGSIPFGLILTRMAGLGDVRKIGSGNIGATNVLRTGNKKLAATTLLLDALKGTAAAAIASLWGVEAGMAAGLAAFLGHLFPVWLSFKGGKGVATYIGVLLGLVPVMVLLFAAAWLAVAKISRYSSLSALVATAIIPVALYATGNGKVALLFAVMTLIAWVKHRANIQRLMSGTESRIGEKG</sequence>
<evidence type="ECO:0000255" key="1">
    <source>
        <dbReference type="HAMAP-Rule" id="MF_01043"/>
    </source>
</evidence>
<name>PLSY_SINMW</name>
<feature type="chain" id="PRO_1000064230" description="Glycerol-3-phosphate acyltransferase">
    <location>
        <begin position="1"/>
        <end position="203"/>
    </location>
</feature>
<feature type="transmembrane region" description="Helical" evidence="1">
    <location>
        <begin position="13"/>
        <end position="33"/>
    </location>
</feature>
<feature type="transmembrane region" description="Helical" evidence="1">
    <location>
        <begin position="66"/>
        <end position="86"/>
    </location>
</feature>
<feature type="transmembrane region" description="Helical" evidence="1">
    <location>
        <begin position="88"/>
        <end position="108"/>
    </location>
</feature>
<feature type="transmembrane region" description="Helical" evidence="1">
    <location>
        <begin position="118"/>
        <end position="138"/>
    </location>
</feature>
<feature type="transmembrane region" description="Helical" evidence="1">
    <location>
        <begin position="156"/>
        <end position="176"/>
    </location>
</feature>
<organism>
    <name type="scientific">Sinorhizobium medicae (strain WSM419)</name>
    <name type="common">Ensifer medicae</name>
    <dbReference type="NCBI Taxonomy" id="366394"/>
    <lineage>
        <taxon>Bacteria</taxon>
        <taxon>Pseudomonadati</taxon>
        <taxon>Pseudomonadota</taxon>
        <taxon>Alphaproteobacteria</taxon>
        <taxon>Hyphomicrobiales</taxon>
        <taxon>Rhizobiaceae</taxon>
        <taxon>Sinorhizobium/Ensifer group</taxon>
        <taxon>Sinorhizobium</taxon>
    </lineage>
</organism>
<reference key="1">
    <citation type="submission" date="2007-06" db="EMBL/GenBank/DDBJ databases">
        <title>Complete sequence of Sinorhizobium medicae WSM419 chromosome.</title>
        <authorList>
            <consortium name="US DOE Joint Genome Institute"/>
            <person name="Copeland A."/>
            <person name="Lucas S."/>
            <person name="Lapidus A."/>
            <person name="Barry K."/>
            <person name="Glavina del Rio T."/>
            <person name="Dalin E."/>
            <person name="Tice H."/>
            <person name="Pitluck S."/>
            <person name="Chain P."/>
            <person name="Malfatti S."/>
            <person name="Shin M."/>
            <person name="Vergez L."/>
            <person name="Schmutz J."/>
            <person name="Larimer F."/>
            <person name="Land M."/>
            <person name="Hauser L."/>
            <person name="Kyrpides N."/>
            <person name="Mikhailova N."/>
            <person name="Reeve W.G."/>
            <person name="Richardson P."/>
        </authorList>
    </citation>
    <scope>NUCLEOTIDE SEQUENCE [LARGE SCALE GENOMIC DNA]</scope>
    <source>
        <strain>WSM419</strain>
    </source>
</reference>
<keyword id="KW-0997">Cell inner membrane</keyword>
<keyword id="KW-1003">Cell membrane</keyword>
<keyword id="KW-0444">Lipid biosynthesis</keyword>
<keyword id="KW-0443">Lipid metabolism</keyword>
<keyword id="KW-0472">Membrane</keyword>
<keyword id="KW-0594">Phospholipid biosynthesis</keyword>
<keyword id="KW-1208">Phospholipid metabolism</keyword>
<keyword id="KW-0808">Transferase</keyword>
<keyword id="KW-0812">Transmembrane</keyword>
<keyword id="KW-1133">Transmembrane helix</keyword>
<accession>A6U809</accession>
<comment type="function">
    <text evidence="1">Catalyzes the transfer of an acyl group from acyl-phosphate (acyl-PO(4)) to glycerol-3-phosphate (G3P) to form lysophosphatidic acid (LPA). This enzyme utilizes acyl-phosphate as fatty acyl donor, but not acyl-CoA or acyl-ACP.</text>
</comment>
<comment type="catalytic activity">
    <reaction evidence="1">
        <text>an acyl phosphate + sn-glycerol 3-phosphate = a 1-acyl-sn-glycero-3-phosphate + phosphate</text>
        <dbReference type="Rhea" id="RHEA:34075"/>
        <dbReference type="ChEBI" id="CHEBI:43474"/>
        <dbReference type="ChEBI" id="CHEBI:57597"/>
        <dbReference type="ChEBI" id="CHEBI:57970"/>
        <dbReference type="ChEBI" id="CHEBI:59918"/>
        <dbReference type="EC" id="2.3.1.275"/>
    </reaction>
</comment>
<comment type="pathway">
    <text evidence="1">Lipid metabolism; phospholipid metabolism.</text>
</comment>
<comment type="subunit">
    <text evidence="1">Probably interacts with PlsX.</text>
</comment>
<comment type="subcellular location">
    <subcellularLocation>
        <location evidence="1">Cell inner membrane</location>
        <topology evidence="1">Multi-pass membrane protein</topology>
    </subcellularLocation>
</comment>
<comment type="similarity">
    <text evidence="1">Belongs to the PlsY family.</text>
</comment>
<gene>
    <name evidence="1" type="primary">plsY</name>
    <name type="ordered locus">Smed_0934</name>
</gene>
<protein>
    <recommendedName>
        <fullName evidence="1">Glycerol-3-phosphate acyltransferase</fullName>
    </recommendedName>
    <alternativeName>
        <fullName evidence="1">Acyl-PO4 G3P acyltransferase</fullName>
    </alternativeName>
    <alternativeName>
        <fullName evidence="1">Acyl-phosphate--glycerol-3-phosphate acyltransferase</fullName>
    </alternativeName>
    <alternativeName>
        <fullName evidence="1">G3P acyltransferase</fullName>
        <shortName evidence="1">GPAT</shortName>
        <ecNumber evidence="1">2.3.1.275</ecNumber>
    </alternativeName>
    <alternativeName>
        <fullName evidence="1">Lysophosphatidic acid synthase</fullName>
        <shortName evidence="1">LPA synthase</shortName>
    </alternativeName>
</protein>